<accession>P41151</accession>
<accession>O23615</accession>
<accession>Q0WNT9</accession>
<reference key="1">
    <citation type="journal article" date="1994" name="Plant Mol. Biol.">
        <title>Arabidopsis heat shock factor: isolation and characterization of the gene and the recombinant protein.</title>
        <authorList>
            <person name="Huebel A."/>
            <person name="Schoeffl F."/>
        </authorList>
    </citation>
    <scope>NUCLEOTIDE SEQUENCE [GENOMIC DNA]</scope>
    <scope>TISSUE SPECIFICITY</scope>
    <scope>INDUCTION</scope>
</reference>
<reference key="2">
    <citation type="journal article" date="1998" name="Nature">
        <title>Analysis of 1.9 Mb of contiguous sequence from chromosome 4 of Arabidopsis thaliana.</title>
        <authorList>
            <person name="Bevan M."/>
            <person name="Bancroft I."/>
            <person name="Bent E."/>
            <person name="Love K."/>
            <person name="Goodman H.M."/>
            <person name="Dean C."/>
            <person name="Bergkamp R."/>
            <person name="Dirkse W."/>
            <person name="van Staveren M."/>
            <person name="Stiekema W."/>
            <person name="Drost L."/>
            <person name="Ridley P."/>
            <person name="Hudson S.-A."/>
            <person name="Patel K."/>
            <person name="Murphy G."/>
            <person name="Piffanelli P."/>
            <person name="Wedler H."/>
            <person name="Wedler E."/>
            <person name="Wambutt R."/>
            <person name="Weitzenegger T."/>
            <person name="Pohl T."/>
            <person name="Terryn N."/>
            <person name="Gielen J."/>
            <person name="Villarroel R."/>
            <person name="De Clercq R."/>
            <person name="van Montagu M."/>
            <person name="Lecharny A."/>
            <person name="Aubourg S."/>
            <person name="Gy I."/>
            <person name="Kreis M."/>
            <person name="Lao N."/>
            <person name="Kavanagh T."/>
            <person name="Hempel S."/>
            <person name="Kotter P."/>
            <person name="Entian K.-D."/>
            <person name="Rieger M."/>
            <person name="Schaefer M."/>
            <person name="Funk B."/>
            <person name="Mueller-Auer S."/>
            <person name="Silvey M."/>
            <person name="James R."/>
            <person name="Monfort A."/>
            <person name="Pons A."/>
            <person name="Puigdomenech P."/>
            <person name="Douka A."/>
            <person name="Voukelatou E."/>
            <person name="Milioni D."/>
            <person name="Hatzopoulos P."/>
            <person name="Piravandi E."/>
            <person name="Obermaier B."/>
            <person name="Hilbert H."/>
            <person name="Duesterhoeft A."/>
            <person name="Moores T."/>
            <person name="Jones J.D.G."/>
            <person name="Eneva T."/>
            <person name="Palme K."/>
            <person name="Benes V."/>
            <person name="Rechmann S."/>
            <person name="Ansorge W."/>
            <person name="Cooke R."/>
            <person name="Berger C."/>
            <person name="Delseny M."/>
            <person name="Voet M."/>
            <person name="Volckaert G."/>
            <person name="Mewes H.-W."/>
            <person name="Klosterman S."/>
            <person name="Schueller C."/>
            <person name="Chalwatzis N."/>
        </authorList>
    </citation>
    <scope>NUCLEOTIDE SEQUENCE [LARGE SCALE GENOMIC DNA]</scope>
    <source>
        <strain>cv. Columbia</strain>
    </source>
</reference>
<reference key="3">
    <citation type="journal article" date="1999" name="Nature">
        <title>Sequence and analysis of chromosome 4 of the plant Arabidopsis thaliana.</title>
        <authorList>
            <person name="Mayer K.F.X."/>
            <person name="Schueller C."/>
            <person name="Wambutt R."/>
            <person name="Murphy G."/>
            <person name="Volckaert G."/>
            <person name="Pohl T."/>
            <person name="Duesterhoeft A."/>
            <person name="Stiekema W."/>
            <person name="Entian K.-D."/>
            <person name="Terryn N."/>
            <person name="Harris B."/>
            <person name="Ansorge W."/>
            <person name="Brandt P."/>
            <person name="Grivell L.A."/>
            <person name="Rieger M."/>
            <person name="Weichselgartner M."/>
            <person name="de Simone V."/>
            <person name="Obermaier B."/>
            <person name="Mache R."/>
            <person name="Mueller M."/>
            <person name="Kreis M."/>
            <person name="Delseny M."/>
            <person name="Puigdomenech P."/>
            <person name="Watson M."/>
            <person name="Schmidtheini T."/>
            <person name="Reichert B."/>
            <person name="Portetelle D."/>
            <person name="Perez-Alonso M."/>
            <person name="Boutry M."/>
            <person name="Bancroft I."/>
            <person name="Vos P."/>
            <person name="Hoheisel J."/>
            <person name="Zimmermann W."/>
            <person name="Wedler H."/>
            <person name="Ridley P."/>
            <person name="Langham S.-A."/>
            <person name="McCullagh B."/>
            <person name="Bilham L."/>
            <person name="Robben J."/>
            <person name="van der Schueren J."/>
            <person name="Grymonprez B."/>
            <person name="Chuang Y.-J."/>
            <person name="Vandenbussche F."/>
            <person name="Braeken M."/>
            <person name="Weltjens I."/>
            <person name="Voet M."/>
            <person name="Bastiaens I."/>
            <person name="Aert R."/>
            <person name="Defoor E."/>
            <person name="Weitzenegger T."/>
            <person name="Bothe G."/>
            <person name="Ramsperger U."/>
            <person name="Hilbert H."/>
            <person name="Braun M."/>
            <person name="Holzer E."/>
            <person name="Brandt A."/>
            <person name="Peters S."/>
            <person name="van Staveren M."/>
            <person name="Dirkse W."/>
            <person name="Mooijman P."/>
            <person name="Klein Lankhorst R."/>
            <person name="Rose M."/>
            <person name="Hauf J."/>
            <person name="Koetter P."/>
            <person name="Berneiser S."/>
            <person name="Hempel S."/>
            <person name="Feldpausch M."/>
            <person name="Lamberth S."/>
            <person name="Van den Daele H."/>
            <person name="De Keyser A."/>
            <person name="Buysshaert C."/>
            <person name="Gielen J."/>
            <person name="Villarroel R."/>
            <person name="De Clercq R."/>
            <person name="van Montagu M."/>
            <person name="Rogers J."/>
            <person name="Cronin A."/>
            <person name="Quail M.A."/>
            <person name="Bray-Allen S."/>
            <person name="Clark L."/>
            <person name="Doggett J."/>
            <person name="Hall S."/>
            <person name="Kay M."/>
            <person name="Lennard N."/>
            <person name="McLay K."/>
            <person name="Mayes R."/>
            <person name="Pettett A."/>
            <person name="Rajandream M.A."/>
            <person name="Lyne M."/>
            <person name="Benes V."/>
            <person name="Rechmann S."/>
            <person name="Borkova D."/>
            <person name="Bloecker H."/>
            <person name="Scharfe M."/>
            <person name="Grimm M."/>
            <person name="Loehnert T.-H."/>
            <person name="Dose S."/>
            <person name="de Haan M."/>
            <person name="Maarse A.C."/>
            <person name="Schaefer M."/>
            <person name="Mueller-Auer S."/>
            <person name="Gabel C."/>
            <person name="Fuchs M."/>
            <person name="Fartmann B."/>
            <person name="Granderath K."/>
            <person name="Dauner D."/>
            <person name="Herzl A."/>
            <person name="Neumann S."/>
            <person name="Argiriou A."/>
            <person name="Vitale D."/>
            <person name="Liguori R."/>
            <person name="Piravandi E."/>
            <person name="Massenet O."/>
            <person name="Quigley F."/>
            <person name="Clabauld G."/>
            <person name="Muendlein A."/>
            <person name="Felber R."/>
            <person name="Schnabl S."/>
            <person name="Hiller R."/>
            <person name="Schmidt W."/>
            <person name="Lecharny A."/>
            <person name="Aubourg S."/>
            <person name="Chefdor F."/>
            <person name="Cooke R."/>
            <person name="Berger C."/>
            <person name="Monfort A."/>
            <person name="Casacuberta E."/>
            <person name="Gibbons T."/>
            <person name="Weber N."/>
            <person name="Vandenbol M."/>
            <person name="Bargues M."/>
            <person name="Terol J."/>
            <person name="Torres A."/>
            <person name="Perez-Perez A."/>
            <person name="Purnelle B."/>
            <person name="Bent E."/>
            <person name="Johnson S."/>
            <person name="Tacon D."/>
            <person name="Jesse T."/>
            <person name="Heijnen L."/>
            <person name="Schwarz S."/>
            <person name="Scholler P."/>
            <person name="Heber S."/>
            <person name="Francs P."/>
            <person name="Bielke C."/>
            <person name="Frishman D."/>
            <person name="Haase D."/>
            <person name="Lemcke K."/>
            <person name="Mewes H.-W."/>
            <person name="Stocker S."/>
            <person name="Zaccaria P."/>
            <person name="Bevan M."/>
            <person name="Wilson R.K."/>
            <person name="de la Bastide M."/>
            <person name="Habermann K."/>
            <person name="Parnell L."/>
            <person name="Dedhia N."/>
            <person name="Gnoj L."/>
            <person name="Schutz K."/>
            <person name="Huang E."/>
            <person name="Spiegel L."/>
            <person name="Sekhon M."/>
            <person name="Murray J."/>
            <person name="Sheet P."/>
            <person name="Cordes M."/>
            <person name="Abu-Threideh J."/>
            <person name="Stoneking T."/>
            <person name="Kalicki J."/>
            <person name="Graves T."/>
            <person name="Harmon G."/>
            <person name="Edwards J."/>
            <person name="Latreille P."/>
            <person name="Courtney L."/>
            <person name="Cloud J."/>
            <person name="Abbott A."/>
            <person name="Scott K."/>
            <person name="Johnson D."/>
            <person name="Minx P."/>
            <person name="Bentley D."/>
            <person name="Fulton B."/>
            <person name="Miller N."/>
            <person name="Greco T."/>
            <person name="Kemp K."/>
            <person name="Kramer J."/>
            <person name="Fulton L."/>
            <person name="Mardis E."/>
            <person name="Dante M."/>
            <person name="Pepin K."/>
            <person name="Hillier L.W."/>
            <person name="Nelson J."/>
            <person name="Spieth J."/>
            <person name="Ryan E."/>
            <person name="Andrews S."/>
            <person name="Geisel C."/>
            <person name="Layman D."/>
            <person name="Du H."/>
            <person name="Ali J."/>
            <person name="Berghoff A."/>
            <person name="Jones K."/>
            <person name="Drone K."/>
            <person name="Cotton M."/>
            <person name="Joshu C."/>
            <person name="Antonoiu B."/>
            <person name="Zidanic M."/>
            <person name="Strong C."/>
            <person name="Sun H."/>
            <person name="Lamar B."/>
            <person name="Yordan C."/>
            <person name="Ma P."/>
            <person name="Zhong J."/>
            <person name="Preston R."/>
            <person name="Vil D."/>
            <person name="Shekher M."/>
            <person name="Matero A."/>
            <person name="Shah R."/>
            <person name="Swaby I.K."/>
            <person name="O'Shaughnessy A."/>
            <person name="Rodriguez M."/>
            <person name="Hoffman J."/>
            <person name="Till S."/>
            <person name="Granat S."/>
            <person name="Shohdy N."/>
            <person name="Hasegawa A."/>
            <person name="Hameed A."/>
            <person name="Lodhi M."/>
            <person name="Johnson A."/>
            <person name="Chen E."/>
            <person name="Marra M.A."/>
            <person name="Martienssen R."/>
            <person name="McCombie W.R."/>
        </authorList>
    </citation>
    <scope>NUCLEOTIDE SEQUENCE [LARGE SCALE GENOMIC DNA]</scope>
    <source>
        <strain>cv. Columbia</strain>
    </source>
</reference>
<reference key="4">
    <citation type="journal article" date="2017" name="Plant J.">
        <title>Araport11: a complete reannotation of the Arabidopsis thaliana reference genome.</title>
        <authorList>
            <person name="Cheng C.Y."/>
            <person name="Krishnakumar V."/>
            <person name="Chan A.P."/>
            <person name="Thibaud-Nissen F."/>
            <person name="Schobel S."/>
            <person name="Town C.D."/>
        </authorList>
    </citation>
    <scope>GENOME REANNOTATION</scope>
    <source>
        <strain>cv. Columbia</strain>
    </source>
</reference>
<reference key="5">
    <citation type="submission" date="2006-07" db="EMBL/GenBank/DDBJ databases">
        <title>Large-scale analysis of RIKEN Arabidopsis full-length (RAFL) cDNAs.</title>
        <authorList>
            <person name="Totoki Y."/>
            <person name="Seki M."/>
            <person name="Ishida J."/>
            <person name="Nakajima M."/>
            <person name="Enju A."/>
            <person name="Kamiya A."/>
            <person name="Narusaka M."/>
            <person name="Shin-i T."/>
            <person name="Nakagawa M."/>
            <person name="Sakamoto N."/>
            <person name="Oishi K."/>
            <person name="Kohara Y."/>
            <person name="Kobayashi M."/>
            <person name="Toyoda A."/>
            <person name="Sakaki Y."/>
            <person name="Sakurai T."/>
            <person name="Iida K."/>
            <person name="Akiyama K."/>
            <person name="Satou M."/>
            <person name="Toyoda T."/>
            <person name="Konagaya A."/>
            <person name="Carninci P."/>
            <person name="Kawai J."/>
            <person name="Hayashizaki Y."/>
            <person name="Shinozaki K."/>
        </authorList>
    </citation>
    <scope>NUCLEOTIDE SEQUENCE [LARGE SCALE MRNA] OF 12-495</scope>
    <source>
        <strain>cv. Columbia</strain>
    </source>
</reference>
<reference key="6">
    <citation type="journal article" date="2001" name="Cell Stress Chaperones">
        <title>Arabidopsis and the heat stress transcription factor world: how many heat stress transcription factors do we need?</title>
        <authorList>
            <person name="Nover L."/>
            <person name="Bharti K."/>
            <person name="Doering P."/>
            <person name="Mishra S.K."/>
            <person name="Ganguli A."/>
            <person name="Scharf K.-D."/>
        </authorList>
    </citation>
    <scope>GENE FAMILY</scope>
    <scope>NOMENCLATURE</scope>
    <scope>DOMAIN AHA</scope>
</reference>
<reference key="7">
    <citation type="journal article" date="2002" name="J. Exp. Bot.">
        <title>Interaction between Arabidopsis heat shock transcription factor 1 and 70 kDa heat shock proteins.</title>
        <authorList>
            <person name="Kim B.H."/>
            <person name="Schoeffl F."/>
        </authorList>
    </citation>
    <scope>INTERACTION WITH HSP70-1 AND HSP70-4</scope>
</reference>
<reference key="8">
    <citation type="journal article" date="2008" name="J. Genet. Genomics">
        <title>Genome-wide analysis of heat shock transcription factor families in rice and Arabidopsis.</title>
        <authorList>
            <person name="Guo J."/>
            <person name="Wu J."/>
            <person name="Ji Q."/>
            <person name="Wang C."/>
            <person name="Luo L."/>
            <person name="Yuan Y."/>
            <person name="Wang Y."/>
            <person name="Wang J."/>
        </authorList>
    </citation>
    <scope>GENE FAMILY</scope>
    <scope>NOMENCLATURE</scope>
</reference>
<reference key="9">
    <citation type="journal article" date="2008" name="Plant J.">
        <title>The calmodulin-binding protein kinase 3 is part of heat-shock signal transduction in Arabidopsis thaliana.</title>
        <authorList>
            <person name="Liu H.-T."/>
            <person name="Gao F."/>
            <person name="Li G.-L."/>
            <person name="Han J.-L."/>
            <person name="Liu D.-L."/>
            <person name="Sun D.-Y."/>
            <person name="Zhou R.-G."/>
        </authorList>
    </citation>
    <scope>INTERACTION WITH CRK1</scope>
    <scope>PHOSPHORYLATION BY CRK1</scope>
</reference>
<reference key="10">
    <citation type="journal article" date="2010" name="Plant Physiol.">
        <title>Cytosol-localized heat shock factor-binding protein, AtHSBP, functions as a negative regulator of heat shock response by translocation to the nucleus and is required for seed development in Arabidopsis.</title>
        <authorList>
            <person name="Hsu S.-F."/>
            <person name="Lai H.-C."/>
            <person name="Jinn T.-L."/>
        </authorList>
    </citation>
    <scope>INTERACTION WITH HSBP</scope>
</reference>
<reference key="11">
    <citation type="journal article" date="2010" name="Plant Signal. Behav.">
        <title>AtHSBP functions in seed development and the motif is required for subcellular localization and interaction with AtHSFs.</title>
        <authorList>
            <person name="Hsu S.-F."/>
            <person name="Jinn T.-L."/>
        </authorList>
    </citation>
    <scope>INTERACTION WITH HSBP</scope>
    <source>
        <strain>cv. Columbia</strain>
    </source>
</reference>
<sequence length="495" mass="55744">MFVNFKYFSFFIRTKMDGVTGGGTNIGEAVTAPPPRNPHPATLLNANSLPPPFLSKTYDMVEDPATDAIVSWSPTNNSFIVWDPPEFSRDLLPKYFKHNNFSSFVRQLNTYGFRKVDPDRWEFANEGFLRGQKHLLKKISRRKSVQGHGSSSSNPQSQQLSQGQGSMAALSSCVEVGKFGLEEEVEQLKRDKNVLMQELVKLRQQQQTTDNKLQVLVKHLQVMEQRQQQIMSFLAKAVQNPTFLSQFIQKQTDSNMHVTEANKKRRLREDSTAATESNSHSHSLEASDGQIVKYQPLRNDSMMWNMMKTDDKYPFLDGFSSPNQVSGVTLQEVLPITSGQSQAYASVPSGQPLSYLPSTSTSLPDTIMPETSQIPQLTRESINDFPTENFMDTEKNVPEAFISPSPFLDGGSVPIQLEGIPEDPEIDELMSNFEFLEEYMPESPVFGDATTLENNNNNNNNNNNNNNNNNNNNTNGRHMDKLIEELGLLTSETEH</sequence>
<keyword id="KW-0010">Activator</keyword>
<keyword id="KW-0963">Cytoplasm</keyword>
<keyword id="KW-0238">DNA-binding</keyword>
<keyword id="KW-0539">Nucleus</keyword>
<keyword id="KW-0597">Phosphoprotein</keyword>
<keyword id="KW-1185">Reference proteome</keyword>
<keyword id="KW-0346">Stress response</keyword>
<keyword id="KW-0804">Transcription</keyword>
<keyword id="KW-0805">Transcription regulation</keyword>
<proteinExistence type="evidence at protein level"/>
<feature type="chain" id="PRO_0000124582" description="Heat stress transcription factor A-1a">
    <location>
        <begin position="1"/>
        <end position="495"/>
    </location>
</feature>
<feature type="DNA-binding region" evidence="1">
    <location>
        <begin position="50"/>
        <end position="144"/>
    </location>
</feature>
<feature type="region of interest" description="Disordered" evidence="3">
    <location>
        <begin position="140"/>
        <end position="164"/>
    </location>
</feature>
<feature type="region of interest" description="Hydrophobic repeat HR-A/B">
    <location>
        <begin position="172"/>
        <end position="238"/>
    </location>
</feature>
<feature type="region of interest" description="Disordered" evidence="3">
    <location>
        <begin position="255"/>
        <end position="288"/>
    </location>
</feature>
<feature type="region of interest" description="Disordered" evidence="3">
    <location>
        <begin position="445"/>
        <end position="477"/>
    </location>
</feature>
<feature type="short sequence motif" description="Nuclear localization signal" evidence="2">
    <location>
        <begin position="262"/>
        <end position="268"/>
    </location>
</feature>
<feature type="short sequence motif" description="AHA">
    <location>
        <begin position="433"/>
        <end position="442"/>
    </location>
</feature>
<feature type="short sequence motif" description="Nuclear export signal" evidence="2">
    <location>
        <begin position="482"/>
        <end position="489"/>
    </location>
</feature>
<feature type="compositionally biased region" description="Low complexity" evidence="3">
    <location>
        <begin position="146"/>
        <end position="164"/>
    </location>
</feature>
<feature type="compositionally biased region" description="Polar residues" evidence="3">
    <location>
        <begin position="272"/>
        <end position="281"/>
    </location>
</feature>
<feature type="compositionally biased region" description="Low complexity" evidence="3">
    <location>
        <begin position="454"/>
        <end position="473"/>
    </location>
</feature>
<feature type="sequence conflict" description="In Ref. 1; CAA53761." evidence="10" ref="1">
    <original>L</original>
    <variation>M</variation>
    <location>
        <position position="216"/>
    </location>
</feature>
<feature type="sequence conflict" description="In Ref. 1; CAA53761." evidence="10" ref="1">
    <original>E</original>
    <variation>D</variation>
    <location>
        <position position="285"/>
    </location>
</feature>
<feature type="sequence conflict" description="In Ref. 1; CAA53761." evidence="10" ref="1">
    <original>I</original>
    <variation>T</variation>
    <location>
        <position position="336"/>
    </location>
</feature>
<feature type="sequence conflict" description="In Ref. 1; CAA53761." evidence="10" ref="1">
    <original>F</original>
    <variation>Y</variation>
    <location>
        <position position="390"/>
    </location>
</feature>
<feature type="sequence conflict" description="In Ref. 1; CAA53761." evidence="10" ref="1">
    <location>
        <begin position="462"/>
        <end position="473"/>
    </location>
</feature>
<gene>
    <name type="primary">HSFA1A</name>
    <name type="synonym">HSF1</name>
    <name type="synonym">HSF13</name>
    <name type="ordered locus">At4g17750</name>
    <name type="ORF">dl4910c</name>
    <name type="ORF">FCAALL.107</name>
</gene>
<dbReference type="EMBL" id="X76167">
    <property type="protein sequence ID" value="CAA53761.1"/>
    <property type="molecule type" value="Genomic_DNA"/>
</dbReference>
<dbReference type="EMBL" id="Z97344">
    <property type="protein sequence ID" value="CAB10555.1"/>
    <property type="molecule type" value="Genomic_DNA"/>
</dbReference>
<dbReference type="EMBL" id="AL161547">
    <property type="protein sequence ID" value="CAB78778.1"/>
    <property type="molecule type" value="Genomic_DNA"/>
</dbReference>
<dbReference type="EMBL" id="CP002687">
    <property type="protein sequence ID" value="AEE83945.1"/>
    <property type="molecule type" value="Genomic_DNA"/>
</dbReference>
<dbReference type="EMBL" id="AK229347">
    <property type="protein sequence ID" value="BAF01210.1"/>
    <property type="molecule type" value="mRNA"/>
</dbReference>
<dbReference type="PIR" id="F71447">
    <property type="entry name" value="S52641"/>
</dbReference>
<dbReference type="RefSeq" id="NP_193510.1">
    <property type="nucleotide sequence ID" value="NM_117884.3"/>
</dbReference>
<dbReference type="SMR" id="P41151"/>
<dbReference type="BioGRID" id="12789">
    <property type="interactions" value="17"/>
</dbReference>
<dbReference type="FunCoup" id="P41151">
    <property type="interactions" value="1291"/>
</dbReference>
<dbReference type="IntAct" id="P41151">
    <property type="interactions" value="6"/>
</dbReference>
<dbReference type="STRING" id="3702.P41151"/>
<dbReference type="iPTMnet" id="P41151"/>
<dbReference type="PaxDb" id="3702-AT4G17750.1"/>
<dbReference type="ProteomicsDB" id="230342"/>
<dbReference type="EnsemblPlants" id="AT4G17750.1">
    <property type="protein sequence ID" value="AT4G17750.1"/>
    <property type="gene ID" value="AT4G17750"/>
</dbReference>
<dbReference type="GeneID" id="827496"/>
<dbReference type="Gramene" id="AT4G17750.1">
    <property type="protein sequence ID" value="AT4G17750.1"/>
    <property type="gene ID" value="AT4G17750"/>
</dbReference>
<dbReference type="KEGG" id="ath:AT4G17750"/>
<dbReference type="Araport" id="AT4G17750"/>
<dbReference type="TAIR" id="AT4G17750">
    <property type="gene designation" value="HSF1"/>
</dbReference>
<dbReference type="eggNOG" id="KOG0627">
    <property type="taxonomic scope" value="Eukaryota"/>
</dbReference>
<dbReference type="HOGENOM" id="CLU_030308_0_6_1"/>
<dbReference type="InParanoid" id="P41151"/>
<dbReference type="OMA" id="HVTEANK"/>
<dbReference type="PhylomeDB" id="P41151"/>
<dbReference type="PRO" id="PR:P41151"/>
<dbReference type="Proteomes" id="UP000006548">
    <property type="component" value="Chromosome 4"/>
</dbReference>
<dbReference type="ExpressionAtlas" id="P41151">
    <property type="expression patterns" value="baseline and differential"/>
</dbReference>
<dbReference type="GO" id="GO:0005737">
    <property type="term" value="C:cytoplasm"/>
    <property type="evidence" value="ECO:0007669"/>
    <property type="project" value="UniProtKB-SubCell"/>
</dbReference>
<dbReference type="GO" id="GO:0005634">
    <property type="term" value="C:nucleus"/>
    <property type="evidence" value="ECO:0000314"/>
    <property type="project" value="TAIR"/>
</dbReference>
<dbReference type="GO" id="GO:0003677">
    <property type="term" value="F:DNA binding"/>
    <property type="evidence" value="ECO:0000314"/>
    <property type="project" value="TAIR"/>
</dbReference>
<dbReference type="GO" id="GO:0003700">
    <property type="term" value="F:DNA-binding transcription factor activity"/>
    <property type="evidence" value="ECO:0000250"/>
    <property type="project" value="TAIR"/>
</dbReference>
<dbReference type="GO" id="GO:0043565">
    <property type="term" value="F:sequence-specific DNA binding"/>
    <property type="evidence" value="ECO:0007669"/>
    <property type="project" value="InterPro"/>
</dbReference>
<dbReference type="GO" id="GO:0009408">
    <property type="term" value="P:response to heat"/>
    <property type="evidence" value="ECO:0000270"/>
    <property type="project" value="TAIR"/>
</dbReference>
<dbReference type="FunFam" id="1.10.10.10:FF:000057">
    <property type="entry name" value="Heat shock transcription factor 1"/>
    <property type="match status" value="1"/>
</dbReference>
<dbReference type="Gene3D" id="1.10.10.10">
    <property type="entry name" value="Winged helix-like DNA-binding domain superfamily/Winged helix DNA-binding domain"/>
    <property type="match status" value="1"/>
</dbReference>
<dbReference type="InterPro" id="IPR000232">
    <property type="entry name" value="HSF_DNA-bd"/>
</dbReference>
<dbReference type="InterPro" id="IPR036388">
    <property type="entry name" value="WH-like_DNA-bd_sf"/>
</dbReference>
<dbReference type="InterPro" id="IPR036390">
    <property type="entry name" value="WH_DNA-bd_sf"/>
</dbReference>
<dbReference type="PANTHER" id="PTHR10015">
    <property type="entry name" value="HEAT SHOCK TRANSCRIPTION FACTOR"/>
    <property type="match status" value="1"/>
</dbReference>
<dbReference type="PANTHER" id="PTHR10015:SF447">
    <property type="entry name" value="HEAT STRESS TRANSCRIPTION FACTOR A-1A"/>
    <property type="match status" value="1"/>
</dbReference>
<dbReference type="Pfam" id="PF00447">
    <property type="entry name" value="HSF_DNA-bind"/>
    <property type="match status" value="1"/>
</dbReference>
<dbReference type="PRINTS" id="PR00056">
    <property type="entry name" value="HSFDOMAIN"/>
</dbReference>
<dbReference type="SMART" id="SM00415">
    <property type="entry name" value="HSF"/>
    <property type="match status" value="1"/>
</dbReference>
<dbReference type="SUPFAM" id="SSF46785">
    <property type="entry name" value="Winged helix' DNA-binding domain"/>
    <property type="match status" value="1"/>
</dbReference>
<dbReference type="PROSITE" id="PS00434">
    <property type="entry name" value="HSF_DOMAIN"/>
    <property type="match status" value="1"/>
</dbReference>
<evidence type="ECO:0000250" key="1"/>
<evidence type="ECO:0000255" key="2"/>
<evidence type="ECO:0000256" key="3">
    <source>
        <dbReference type="SAM" id="MobiDB-lite"/>
    </source>
</evidence>
<evidence type="ECO:0000269" key="4">
    <source>
    </source>
</evidence>
<evidence type="ECO:0000269" key="5">
    <source>
    </source>
</evidence>
<evidence type="ECO:0000269" key="6">
    <source>
    </source>
</evidence>
<evidence type="ECO:0000269" key="7">
    <source>
    </source>
</evidence>
<evidence type="ECO:0000269" key="8">
    <source>
    </source>
</evidence>
<evidence type="ECO:0000269" key="9">
    <source>
    </source>
</evidence>
<evidence type="ECO:0000305" key="10"/>
<organism>
    <name type="scientific">Arabidopsis thaliana</name>
    <name type="common">Mouse-ear cress</name>
    <dbReference type="NCBI Taxonomy" id="3702"/>
    <lineage>
        <taxon>Eukaryota</taxon>
        <taxon>Viridiplantae</taxon>
        <taxon>Streptophyta</taxon>
        <taxon>Embryophyta</taxon>
        <taxon>Tracheophyta</taxon>
        <taxon>Spermatophyta</taxon>
        <taxon>Magnoliopsida</taxon>
        <taxon>eudicotyledons</taxon>
        <taxon>Gunneridae</taxon>
        <taxon>Pentapetalae</taxon>
        <taxon>rosids</taxon>
        <taxon>malvids</taxon>
        <taxon>Brassicales</taxon>
        <taxon>Brassicaceae</taxon>
        <taxon>Camelineae</taxon>
        <taxon>Arabidopsis</taxon>
    </lineage>
</organism>
<comment type="function">
    <text>Transcriptional activator that specifically binds DNA sequence 5'-AGAAnnTTCT-3' known as heat shock promoter elements (HSE).</text>
</comment>
<comment type="subunit">
    <text evidence="5 6 7 8">Homotrimer (PubMed:11807141). Interacts with HSP70-1 and HSP70-4 (PubMed:11807141). Binds to CRK1 (PubMed:18466301). Binds to HSBP (PubMed:20388662, PubMed:20657173).</text>
</comment>
<comment type="interaction">
    <interactant intactId="EBI-1544927">
        <id>P41151</id>
    </interactant>
    <interactant intactId="EBI-1804894">
        <id>O80673</id>
        <label>CRK1</label>
    </interactant>
    <organismsDiffer>false</organismsDiffer>
    <experiments>3</experiments>
</comment>
<comment type="interaction">
    <interactant intactId="EBI-1544927">
        <id>P41151</id>
    </interactant>
    <interactant intactId="EBI-1247453">
        <id>P28147</id>
        <label>TBP1</label>
    </interactant>
    <organismsDiffer>false</organismsDiffer>
    <experiments>3</experiments>
</comment>
<comment type="interaction">
    <interactant intactId="EBI-1544927">
        <id>P41151</id>
    </interactant>
    <interactant intactId="EBI-1247465">
        <id>P28148</id>
        <label>TBP2</label>
    </interactant>
    <organismsDiffer>false</organismsDiffer>
    <experiments>2</experiments>
</comment>
<comment type="subcellular location">
    <subcellularLocation>
        <location evidence="10">Cytoplasm</location>
    </subcellularLocation>
    <subcellularLocation>
        <location>Nucleus</location>
    </subcellularLocation>
</comment>
<comment type="tissue specificity">
    <text evidence="9">Constitutively expressed.</text>
</comment>
<comment type="induction">
    <text evidence="9">By heat stress.</text>
</comment>
<comment type="domain">
    <text evidence="4">The hydrophobic-rich region (HR-A/B) corresponds to the oligomerization domain. AHA motif is a transcriptional activator element.</text>
</comment>
<comment type="PTM">
    <text evidence="1 6">Exhibits temperature-dependent phosphorylation (By similarity). Phosphorylated by CRK1.</text>
</comment>
<comment type="similarity">
    <text evidence="10">Belongs to the HSF family. Class A subfamily.</text>
</comment>
<name>HFA1A_ARATH</name>
<protein>
    <recommendedName>
        <fullName>Heat stress transcription factor A-1a</fullName>
        <shortName>AtHsfA1a</shortName>
    </recommendedName>
    <alternativeName>
        <fullName>AtHsf-13</fullName>
    </alternativeName>
    <alternativeName>
        <fullName>Heat shock factor protein 1</fullName>
        <shortName>HSF 1</shortName>
    </alternativeName>
    <alternativeName>
        <fullName>Heat shock transcription factor 1</fullName>
        <shortName>HSTF 1</shortName>
    </alternativeName>
</protein>